<evidence type="ECO:0000255" key="1">
    <source>
        <dbReference type="HAMAP-Rule" id="MF_00190"/>
    </source>
</evidence>
<accession>C4ZTU1</accession>
<keyword id="KW-0997">Cell inner membrane</keyword>
<keyword id="KW-1003">Cell membrane</keyword>
<keyword id="KW-0444">Lipid biosynthesis</keyword>
<keyword id="KW-0443">Lipid metabolism</keyword>
<keyword id="KW-0472">Membrane</keyword>
<keyword id="KW-0594">Phospholipid biosynthesis</keyword>
<keyword id="KW-1208">Phospholipid metabolism</keyword>
<keyword id="KW-0677">Repeat</keyword>
<keyword id="KW-0808">Transferase</keyword>
<keyword id="KW-0812">Transmembrane</keyword>
<keyword id="KW-1133">Transmembrane helix</keyword>
<gene>
    <name evidence="1" type="primary">clsA</name>
    <name type="synonym">cls</name>
    <name type="ordered locus">BWG_1077</name>
</gene>
<protein>
    <recommendedName>
        <fullName evidence="1">Cardiolipin synthase A</fullName>
        <shortName evidence="1">CL synthase</shortName>
        <ecNumber evidence="1">2.7.8.-</ecNumber>
    </recommendedName>
</protein>
<sequence>MTTVYTLVSWLAILGYWLLIAGVTLRILMKRRAVPSAMAWLLIIYILPLVGIIAYLAVGELHLGKRRAERARAMWPSTAKWLNDLKACKHIFAEENSSVAAPLFKLCERRQGIAGVKGNQLQLMTESDDVMQALIRDIQLARHNIEMVFYIWQPGGMADQVAESLMAAARRGIHCRLMLDSAGSVAFFRSPWPELMRNAGIEVVEALKVNLMRVFLRRMDLRQHRKMIMIDNYIAYTGSMNMVDPRYFKQDAGVGQWIDLMARMEGPIATAMGIIYSCDWEIETGKRILPPPPDVNIMPFEQASGHTIHTIASGPGFPEDLIHQALLTAAYSAREYLIMTTPYFVPSDDLLHAICTAAQRGVDVSIILPRKNDSMLVGWASRAFFTELLAAGVKIYQFEGGLLHTKSVLVDGELSLVGTVNLDMRSLWLNFEITLAIDDKGFGADLAAVQDDYISRSRLLDARLWLKRPLWQRVAERLFYFFSPLL</sequence>
<feature type="chain" id="PRO_1000203993" description="Cardiolipin synthase A">
    <location>
        <begin position="1"/>
        <end position="486"/>
    </location>
</feature>
<feature type="transmembrane region" description="Helical" evidence="1">
    <location>
        <begin position="3"/>
        <end position="23"/>
    </location>
</feature>
<feature type="transmembrane region" description="Helical" evidence="1">
    <location>
        <begin position="38"/>
        <end position="58"/>
    </location>
</feature>
<feature type="domain" description="PLD phosphodiesterase 1" evidence="1">
    <location>
        <begin position="219"/>
        <end position="246"/>
    </location>
</feature>
<feature type="domain" description="PLD phosphodiesterase 2" evidence="1">
    <location>
        <begin position="399"/>
        <end position="426"/>
    </location>
</feature>
<feature type="active site" evidence="1">
    <location>
        <position position="224"/>
    </location>
</feature>
<feature type="active site" evidence="1">
    <location>
        <position position="226"/>
    </location>
</feature>
<feature type="active site" evidence="1">
    <location>
        <position position="231"/>
    </location>
</feature>
<feature type="active site" evidence="1">
    <location>
        <position position="404"/>
    </location>
</feature>
<feature type="active site" evidence="1">
    <location>
        <position position="406"/>
    </location>
</feature>
<feature type="active site" evidence="1">
    <location>
        <position position="411"/>
    </location>
</feature>
<proteinExistence type="inferred from homology"/>
<name>CLSA_ECOBW</name>
<comment type="function">
    <text evidence="1">Catalyzes the reversible phosphatidyl group transfer from one phosphatidylglycerol molecule to another to form cardiolipin (CL) (diphosphatidylglycerol) and glycerol.</text>
</comment>
<comment type="catalytic activity">
    <reaction evidence="1">
        <text>2 a 1,2-diacyl-sn-glycero-3-phospho-(1'-sn-glycerol) = a cardiolipin + glycerol</text>
        <dbReference type="Rhea" id="RHEA:31451"/>
        <dbReference type="ChEBI" id="CHEBI:17754"/>
        <dbReference type="ChEBI" id="CHEBI:62237"/>
        <dbReference type="ChEBI" id="CHEBI:64716"/>
    </reaction>
</comment>
<comment type="subcellular location">
    <subcellularLocation>
        <location evidence="1">Cell inner membrane</location>
        <topology evidence="1">Multi-pass membrane protein</topology>
    </subcellularLocation>
</comment>
<comment type="similarity">
    <text evidence="1">Belongs to the phospholipase D family. Cardiolipin synthase subfamily. ClsA sub-subfamily.</text>
</comment>
<reference key="1">
    <citation type="journal article" date="2009" name="J. Bacteriol.">
        <title>Genomic sequencing reveals regulatory mutations and recombinational events in the widely used MC4100 lineage of Escherichia coli K-12.</title>
        <authorList>
            <person name="Ferenci T."/>
            <person name="Zhou Z."/>
            <person name="Betteridge T."/>
            <person name="Ren Y."/>
            <person name="Liu Y."/>
            <person name="Feng L."/>
            <person name="Reeves P.R."/>
            <person name="Wang L."/>
        </authorList>
    </citation>
    <scope>NUCLEOTIDE SEQUENCE [LARGE SCALE GENOMIC DNA]</scope>
    <source>
        <strain>K12 / MC4100 / BW2952</strain>
    </source>
</reference>
<dbReference type="EC" id="2.7.8.-" evidence="1"/>
<dbReference type="EMBL" id="CP001396">
    <property type="protein sequence ID" value="ACR62117.1"/>
    <property type="molecule type" value="Genomic_DNA"/>
</dbReference>
<dbReference type="RefSeq" id="WP_000214516.1">
    <property type="nucleotide sequence ID" value="NC_012759.1"/>
</dbReference>
<dbReference type="SMR" id="C4ZTU1"/>
<dbReference type="GeneID" id="93775314"/>
<dbReference type="KEGG" id="ebw:BWG_1077"/>
<dbReference type="HOGENOM" id="CLU_038053_1_0_6"/>
<dbReference type="GO" id="GO:0005886">
    <property type="term" value="C:plasma membrane"/>
    <property type="evidence" value="ECO:0007669"/>
    <property type="project" value="UniProtKB-SubCell"/>
</dbReference>
<dbReference type="GO" id="GO:0008808">
    <property type="term" value="F:cardiolipin synthase activity"/>
    <property type="evidence" value="ECO:0007669"/>
    <property type="project" value="InterPro"/>
</dbReference>
<dbReference type="GO" id="GO:0032049">
    <property type="term" value="P:cardiolipin biosynthetic process"/>
    <property type="evidence" value="ECO:0007669"/>
    <property type="project" value="InterPro"/>
</dbReference>
<dbReference type="CDD" id="cd09152">
    <property type="entry name" value="PLDc_EcCLS_like_1"/>
    <property type="match status" value="1"/>
</dbReference>
<dbReference type="CDD" id="cd09158">
    <property type="entry name" value="PLDc_EcCLS_like_2"/>
    <property type="match status" value="1"/>
</dbReference>
<dbReference type="FunFam" id="3.30.870.10:FF:000002">
    <property type="entry name" value="Cardiolipin synthase A"/>
    <property type="match status" value="1"/>
</dbReference>
<dbReference type="FunFam" id="3.30.870.10:FF:000003">
    <property type="entry name" value="Cardiolipin synthase A"/>
    <property type="match status" value="1"/>
</dbReference>
<dbReference type="Gene3D" id="3.30.870.10">
    <property type="entry name" value="Endonuclease Chain A"/>
    <property type="match status" value="2"/>
</dbReference>
<dbReference type="HAMAP" id="MF_00190">
    <property type="entry name" value="Cardiolipin_synth_ClsA"/>
    <property type="match status" value="1"/>
</dbReference>
<dbReference type="InterPro" id="IPR022924">
    <property type="entry name" value="Cardiolipin_synthase"/>
</dbReference>
<dbReference type="InterPro" id="IPR030840">
    <property type="entry name" value="CL_synthase_A"/>
</dbReference>
<dbReference type="InterPro" id="IPR027379">
    <property type="entry name" value="CLS_N"/>
</dbReference>
<dbReference type="InterPro" id="IPR025202">
    <property type="entry name" value="PLD-like_dom"/>
</dbReference>
<dbReference type="InterPro" id="IPR001736">
    <property type="entry name" value="PLipase_D/transphosphatidylase"/>
</dbReference>
<dbReference type="NCBIfam" id="TIGR04265">
    <property type="entry name" value="bac_cardiolipin"/>
    <property type="match status" value="1"/>
</dbReference>
<dbReference type="PANTHER" id="PTHR21248">
    <property type="entry name" value="CARDIOLIPIN SYNTHASE"/>
    <property type="match status" value="1"/>
</dbReference>
<dbReference type="PANTHER" id="PTHR21248:SF22">
    <property type="entry name" value="PHOSPHOLIPASE D"/>
    <property type="match status" value="1"/>
</dbReference>
<dbReference type="Pfam" id="PF13091">
    <property type="entry name" value="PLDc_2"/>
    <property type="match status" value="2"/>
</dbReference>
<dbReference type="Pfam" id="PF13396">
    <property type="entry name" value="PLDc_N"/>
    <property type="match status" value="1"/>
</dbReference>
<dbReference type="SMART" id="SM00155">
    <property type="entry name" value="PLDc"/>
    <property type="match status" value="2"/>
</dbReference>
<dbReference type="SUPFAM" id="SSF56024">
    <property type="entry name" value="Phospholipase D/nuclease"/>
    <property type="match status" value="2"/>
</dbReference>
<dbReference type="PROSITE" id="PS50035">
    <property type="entry name" value="PLD"/>
    <property type="match status" value="2"/>
</dbReference>
<organism>
    <name type="scientific">Escherichia coli (strain K12 / MC4100 / BW2952)</name>
    <dbReference type="NCBI Taxonomy" id="595496"/>
    <lineage>
        <taxon>Bacteria</taxon>
        <taxon>Pseudomonadati</taxon>
        <taxon>Pseudomonadota</taxon>
        <taxon>Gammaproteobacteria</taxon>
        <taxon>Enterobacterales</taxon>
        <taxon>Enterobacteriaceae</taxon>
        <taxon>Escherichia</taxon>
    </lineage>
</organism>